<sequence>MHPSTFVTTIACLAGLAHGYANPGSCSGACNIHDPALIRRQSDGKYFRFSTGNKISYASSSSIKGPWTVLGSVLPRGSSINLPGKTDLWAPDISLVNGAYHLYYSVSAFGSQDSAIGLATSATMDPNSWTDHGSTGIRSSSSKPYNAIDANLFHDGGNYYMTFGSFWHDIYQAPMNSAATAVSSGPYNIAYNPSGTHAVEGAFMYKFGKYYYLFFSSGICCGYDTSRPAAGKEYKIRVCRSTSATGHFVDKHGVSCTNGGGTVVLESHGHVYGPGGQGVFTDPALGPVLYYHYVDTRIGYADGQKRFGWNKIDFSSGWPVV</sequence>
<keyword id="KW-0119">Carbohydrate metabolism</keyword>
<keyword id="KW-0326">Glycosidase</keyword>
<keyword id="KW-0378">Hydrolase</keyword>
<keyword id="KW-0624">Polysaccharide degradation</keyword>
<keyword id="KW-1185">Reference proteome</keyword>
<keyword id="KW-0964">Secreted</keyword>
<keyword id="KW-0732">Signal</keyword>
<keyword id="KW-0858">Xylan degradation</keyword>
<gene>
    <name type="primary">abnA</name>
    <name type="ORF">ACLA_042100</name>
</gene>
<name>ABNA_ASPCL</name>
<dbReference type="EC" id="3.2.1.99"/>
<dbReference type="EMBL" id="DS027056">
    <property type="protein sequence ID" value="EAW09988.1"/>
    <property type="molecule type" value="Genomic_DNA"/>
</dbReference>
<dbReference type="RefSeq" id="XP_001271414.1">
    <property type="nucleotide sequence ID" value="XM_001271413.1"/>
</dbReference>
<dbReference type="SMR" id="A1CLG4"/>
<dbReference type="STRING" id="344612.A1CLG4"/>
<dbReference type="EnsemblFungi" id="EAW09988">
    <property type="protein sequence ID" value="EAW09988"/>
    <property type="gene ID" value="ACLA_042100"/>
</dbReference>
<dbReference type="GeneID" id="4702768"/>
<dbReference type="KEGG" id="act:ACLA_042100"/>
<dbReference type="VEuPathDB" id="FungiDB:ACLA_042100"/>
<dbReference type="eggNOG" id="ENOG502QTQG">
    <property type="taxonomic scope" value="Eukaryota"/>
</dbReference>
<dbReference type="HOGENOM" id="CLU_009397_5_0_1"/>
<dbReference type="OMA" id="GHLWAPD"/>
<dbReference type="OrthoDB" id="195678at2759"/>
<dbReference type="UniPathway" id="UPA00667"/>
<dbReference type="Proteomes" id="UP000006701">
    <property type="component" value="Unassembled WGS sequence"/>
</dbReference>
<dbReference type="GO" id="GO:0005576">
    <property type="term" value="C:extracellular region"/>
    <property type="evidence" value="ECO:0007669"/>
    <property type="project" value="UniProtKB-SubCell"/>
</dbReference>
<dbReference type="GO" id="GO:0046558">
    <property type="term" value="F:arabinan endo-1,5-alpha-L-arabinosidase activity"/>
    <property type="evidence" value="ECO:0007669"/>
    <property type="project" value="UniProtKB-EC"/>
</dbReference>
<dbReference type="GO" id="GO:0031222">
    <property type="term" value="P:arabinan catabolic process"/>
    <property type="evidence" value="ECO:0007669"/>
    <property type="project" value="UniProtKB-UniPathway"/>
</dbReference>
<dbReference type="GO" id="GO:0045493">
    <property type="term" value="P:xylan catabolic process"/>
    <property type="evidence" value="ECO:0007669"/>
    <property type="project" value="UniProtKB-KW"/>
</dbReference>
<dbReference type="CDD" id="cd18831">
    <property type="entry name" value="GH43_AnAbnA-like"/>
    <property type="match status" value="1"/>
</dbReference>
<dbReference type="FunFam" id="2.115.10.20:FF:000005">
    <property type="entry name" value="Arabinan endo-1,5-alpha-L-arabinosidase"/>
    <property type="match status" value="1"/>
</dbReference>
<dbReference type="Gene3D" id="2.115.10.20">
    <property type="entry name" value="Glycosyl hydrolase domain, family 43"/>
    <property type="match status" value="1"/>
</dbReference>
<dbReference type="InterPro" id="IPR050727">
    <property type="entry name" value="GH43_arabinanases"/>
</dbReference>
<dbReference type="InterPro" id="IPR006710">
    <property type="entry name" value="Glyco_hydro_43"/>
</dbReference>
<dbReference type="InterPro" id="IPR016840">
    <property type="entry name" value="Glyco_hydro_43_endo_a_Ara-ase"/>
</dbReference>
<dbReference type="InterPro" id="IPR023296">
    <property type="entry name" value="Glyco_hydro_beta-prop_sf"/>
</dbReference>
<dbReference type="PANTHER" id="PTHR43301">
    <property type="entry name" value="ARABINAN ENDO-1,5-ALPHA-L-ARABINOSIDASE"/>
    <property type="match status" value="1"/>
</dbReference>
<dbReference type="PANTHER" id="PTHR43301:SF3">
    <property type="entry name" value="ARABINAN ENDO-1,5-ALPHA-L-ARABINOSIDASE A-RELATED"/>
    <property type="match status" value="1"/>
</dbReference>
<dbReference type="Pfam" id="PF04616">
    <property type="entry name" value="Glyco_hydro_43"/>
    <property type="match status" value="1"/>
</dbReference>
<dbReference type="PIRSF" id="PIRSF026534">
    <property type="entry name" value="Endo_alpha-L-arabinosidase"/>
    <property type="match status" value="1"/>
</dbReference>
<dbReference type="SUPFAM" id="SSF75005">
    <property type="entry name" value="Arabinanase/levansucrase/invertase"/>
    <property type="match status" value="1"/>
</dbReference>
<feature type="signal peptide" evidence="3">
    <location>
        <begin position="1"/>
        <end position="19"/>
    </location>
</feature>
<feature type="chain" id="PRO_0000394617" description="Probable arabinan endo-1,5-alpha-L-arabinosidase A">
    <location>
        <begin position="20"/>
        <end position="321"/>
    </location>
</feature>
<feature type="active site" description="Proton acceptor" evidence="2">
    <location>
        <position position="34"/>
    </location>
</feature>
<feature type="active site" description="Proton donor" evidence="2">
    <location>
        <position position="200"/>
    </location>
</feature>
<feature type="site" description="Important for catalytic activity, responsible for pKa modulation of the active site Glu and correct orientation of both the proton donor and substrate" evidence="2">
    <location>
        <position position="149"/>
    </location>
</feature>
<evidence type="ECO:0000250" key="1"/>
<evidence type="ECO:0000250" key="2">
    <source>
        <dbReference type="UniProtKB" id="P94522"/>
    </source>
</evidence>
<evidence type="ECO:0000255" key="3"/>
<evidence type="ECO:0000305" key="4"/>
<organism>
    <name type="scientific">Aspergillus clavatus (strain ATCC 1007 / CBS 513.65 / DSM 816 / NCTC 3887 / NRRL 1 / QM 1276 / 107)</name>
    <dbReference type="NCBI Taxonomy" id="344612"/>
    <lineage>
        <taxon>Eukaryota</taxon>
        <taxon>Fungi</taxon>
        <taxon>Dikarya</taxon>
        <taxon>Ascomycota</taxon>
        <taxon>Pezizomycotina</taxon>
        <taxon>Eurotiomycetes</taxon>
        <taxon>Eurotiomycetidae</taxon>
        <taxon>Eurotiales</taxon>
        <taxon>Aspergillaceae</taxon>
        <taxon>Aspergillus</taxon>
        <taxon>Aspergillus subgen. Fumigati</taxon>
    </lineage>
</organism>
<reference key="1">
    <citation type="journal article" date="2008" name="PLoS Genet.">
        <title>Genomic islands in the pathogenic filamentous fungus Aspergillus fumigatus.</title>
        <authorList>
            <person name="Fedorova N.D."/>
            <person name="Khaldi N."/>
            <person name="Joardar V.S."/>
            <person name="Maiti R."/>
            <person name="Amedeo P."/>
            <person name="Anderson M.J."/>
            <person name="Crabtree J."/>
            <person name="Silva J.C."/>
            <person name="Badger J.H."/>
            <person name="Albarraq A."/>
            <person name="Angiuoli S."/>
            <person name="Bussey H."/>
            <person name="Bowyer P."/>
            <person name="Cotty P.J."/>
            <person name="Dyer P.S."/>
            <person name="Egan A."/>
            <person name="Galens K."/>
            <person name="Fraser-Liggett C.M."/>
            <person name="Haas B.J."/>
            <person name="Inman J.M."/>
            <person name="Kent R."/>
            <person name="Lemieux S."/>
            <person name="Malavazi I."/>
            <person name="Orvis J."/>
            <person name="Roemer T."/>
            <person name="Ronning C.M."/>
            <person name="Sundaram J.P."/>
            <person name="Sutton G."/>
            <person name="Turner G."/>
            <person name="Venter J.C."/>
            <person name="White O.R."/>
            <person name="Whitty B.R."/>
            <person name="Youngman P."/>
            <person name="Wolfe K.H."/>
            <person name="Goldman G.H."/>
            <person name="Wortman J.R."/>
            <person name="Jiang B."/>
            <person name="Denning D.W."/>
            <person name="Nierman W.C."/>
        </authorList>
    </citation>
    <scope>NUCLEOTIDE SEQUENCE [LARGE SCALE GENOMIC DNA]</scope>
    <source>
        <strain>ATCC 1007 / CBS 513.65 / DSM 816 / NCTC 3887 / NRRL 1 / QM 1276 / 107</strain>
    </source>
</reference>
<comment type="function">
    <text evidence="1">Endo-1,5-alpha-L-arabinanase involved in degradation of pectin. Its preferred substrate is linear 1,5-alpha-L-arabinan (By similarity).</text>
</comment>
<comment type="catalytic activity">
    <reaction>
        <text>Endohydrolysis of (1-&gt;5)-alpha-arabinofuranosidic linkages in (1-&gt;5)-arabinans.</text>
        <dbReference type="EC" id="3.2.1.99"/>
    </reaction>
</comment>
<comment type="pathway">
    <text>Glycan metabolism; L-arabinan degradation.</text>
</comment>
<comment type="subcellular location">
    <subcellularLocation>
        <location evidence="1">Secreted</location>
    </subcellularLocation>
</comment>
<comment type="similarity">
    <text evidence="4">Belongs to the glycosyl hydrolase 43 family.</text>
</comment>
<protein>
    <recommendedName>
        <fullName>Probable arabinan endo-1,5-alpha-L-arabinosidase A</fullName>
        <ecNumber>3.2.1.99</ecNumber>
    </recommendedName>
    <alternativeName>
        <fullName>Endo-1,5-alpha-L-arabinanase A</fullName>
        <shortName>ABN A</shortName>
    </alternativeName>
</protein>
<accession>A1CLG4</accession>
<proteinExistence type="inferred from homology"/>